<keyword id="KW-0963">Cytoplasm</keyword>
<keyword id="KW-0378">Hydrolase</keyword>
<keyword id="KW-0546">Nucleotide metabolism</keyword>
<protein>
    <recommendedName>
        <fullName evidence="1">Nucleoside triphosphate pyrophosphatase</fullName>
        <ecNumber evidence="1">3.6.1.9</ecNumber>
    </recommendedName>
    <alternativeName>
        <fullName evidence="1">Nucleotide pyrophosphatase</fullName>
        <shortName evidence="1">Nucleotide PPase</shortName>
    </alternativeName>
</protein>
<comment type="function">
    <text evidence="1">Nucleoside triphosphate pyrophosphatase. May have a dual role in cell division arrest and in preventing the incorporation of modified nucleotides into cellular nucleic acids.</text>
</comment>
<comment type="catalytic activity">
    <reaction evidence="1">
        <text>a ribonucleoside 5'-triphosphate + H2O = a ribonucleoside 5'-phosphate + diphosphate + H(+)</text>
        <dbReference type="Rhea" id="RHEA:23996"/>
        <dbReference type="ChEBI" id="CHEBI:15377"/>
        <dbReference type="ChEBI" id="CHEBI:15378"/>
        <dbReference type="ChEBI" id="CHEBI:33019"/>
        <dbReference type="ChEBI" id="CHEBI:58043"/>
        <dbReference type="ChEBI" id="CHEBI:61557"/>
        <dbReference type="EC" id="3.6.1.9"/>
    </reaction>
</comment>
<comment type="catalytic activity">
    <reaction evidence="1">
        <text>a 2'-deoxyribonucleoside 5'-triphosphate + H2O = a 2'-deoxyribonucleoside 5'-phosphate + diphosphate + H(+)</text>
        <dbReference type="Rhea" id="RHEA:44644"/>
        <dbReference type="ChEBI" id="CHEBI:15377"/>
        <dbReference type="ChEBI" id="CHEBI:15378"/>
        <dbReference type="ChEBI" id="CHEBI:33019"/>
        <dbReference type="ChEBI" id="CHEBI:61560"/>
        <dbReference type="ChEBI" id="CHEBI:65317"/>
        <dbReference type="EC" id="3.6.1.9"/>
    </reaction>
</comment>
<comment type="cofactor">
    <cofactor evidence="1">
        <name>a divalent metal cation</name>
        <dbReference type="ChEBI" id="CHEBI:60240"/>
    </cofactor>
</comment>
<comment type="subcellular location">
    <subcellularLocation>
        <location evidence="1">Cytoplasm</location>
    </subcellularLocation>
</comment>
<comment type="similarity">
    <text evidence="1">Belongs to the Maf family.</text>
</comment>
<accession>Q0S319</accession>
<name>NTPP_RHOJR</name>
<sequence length="214" mass="21791">MTSFVLASASPARLAVLRSAGVEPIVRVSGVDEDAVIAALGADAAPEHVVTELARAKASDVLPVLARDGISDAVVVGCDSMLLIDGSLQGKPGTVDVARARWSAMAGRSATLLTGHSVLRIAEGAVVGDAHDHSATVVHFASPPDADLEAYLATGEPLQVAGAFTLDSLGGWFVDRIEGDPSSVIGIGLPLVRRLLAEVGVGVAELWASSGRVD</sequence>
<gene>
    <name type="ordered locus">RHA1_ro06290</name>
</gene>
<dbReference type="EC" id="3.6.1.9" evidence="1"/>
<dbReference type="EMBL" id="CP000431">
    <property type="protein sequence ID" value="ABG98067.1"/>
    <property type="molecule type" value="Genomic_DNA"/>
</dbReference>
<dbReference type="RefSeq" id="WP_009479497.1">
    <property type="nucleotide sequence ID" value="NC_008268.1"/>
</dbReference>
<dbReference type="SMR" id="Q0S319"/>
<dbReference type="KEGG" id="rha:RHA1_ro06290"/>
<dbReference type="eggNOG" id="COG0424">
    <property type="taxonomic scope" value="Bacteria"/>
</dbReference>
<dbReference type="HOGENOM" id="CLU_040416_1_2_11"/>
<dbReference type="OrthoDB" id="3527985at2"/>
<dbReference type="Proteomes" id="UP000008710">
    <property type="component" value="Chromosome"/>
</dbReference>
<dbReference type="GO" id="GO:0005737">
    <property type="term" value="C:cytoplasm"/>
    <property type="evidence" value="ECO:0007669"/>
    <property type="project" value="UniProtKB-SubCell"/>
</dbReference>
<dbReference type="GO" id="GO:0047429">
    <property type="term" value="F:nucleoside triphosphate diphosphatase activity"/>
    <property type="evidence" value="ECO:0007669"/>
    <property type="project" value="UniProtKB-EC"/>
</dbReference>
<dbReference type="GO" id="GO:0009117">
    <property type="term" value="P:nucleotide metabolic process"/>
    <property type="evidence" value="ECO:0007669"/>
    <property type="project" value="UniProtKB-KW"/>
</dbReference>
<dbReference type="CDD" id="cd00555">
    <property type="entry name" value="Maf"/>
    <property type="match status" value="1"/>
</dbReference>
<dbReference type="Gene3D" id="3.90.950.10">
    <property type="match status" value="1"/>
</dbReference>
<dbReference type="HAMAP" id="MF_00528">
    <property type="entry name" value="Maf"/>
    <property type="match status" value="1"/>
</dbReference>
<dbReference type="InterPro" id="IPR029001">
    <property type="entry name" value="ITPase-like_fam"/>
</dbReference>
<dbReference type="InterPro" id="IPR003697">
    <property type="entry name" value="Maf-like"/>
</dbReference>
<dbReference type="NCBIfam" id="TIGR00172">
    <property type="entry name" value="maf"/>
    <property type="match status" value="1"/>
</dbReference>
<dbReference type="PANTHER" id="PTHR43213">
    <property type="entry name" value="BIFUNCTIONAL DTTP/UTP PYROPHOSPHATASE/METHYLTRANSFERASE PROTEIN-RELATED"/>
    <property type="match status" value="1"/>
</dbReference>
<dbReference type="PANTHER" id="PTHR43213:SF5">
    <property type="entry name" value="BIFUNCTIONAL DTTP_UTP PYROPHOSPHATASE_METHYLTRANSFERASE PROTEIN-RELATED"/>
    <property type="match status" value="1"/>
</dbReference>
<dbReference type="Pfam" id="PF02545">
    <property type="entry name" value="Maf"/>
    <property type="match status" value="1"/>
</dbReference>
<dbReference type="PIRSF" id="PIRSF006305">
    <property type="entry name" value="Maf"/>
    <property type="match status" value="1"/>
</dbReference>
<dbReference type="SUPFAM" id="SSF52972">
    <property type="entry name" value="ITPase-like"/>
    <property type="match status" value="1"/>
</dbReference>
<reference key="1">
    <citation type="journal article" date="2006" name="Proc. Natl. Acad. Sci. U.S.A.">
        <title>The complete genome of Rhodococcus sp. RHA1 provides insights into a catabolic powerhouse.</title>
        <authorList>
            <person name="McLeod M.P."/>
            <person name="Warren R.L."/>
            <person name="Hsiao W.W.L."/>
            <person name="Araki N."/>
            <person name="Myhre M."/>
            <person name="Fernandes C."/>
            <person name="Miyazawa D."/>
            <person name="Wong W."/>
            <person name="Lillquist A.L."/>
            <person name="Wang D."/>
            <person name="Dosanjh M."/>
            <person name="Hara H."/>
            <person name="Petrescu A."/>
            <person name="Morin R.D."/>
            <person name="Yang G."/>
            <person name="Stott J.M."/>
            <person name="Schein J.E."/>
            <person name="Shin H."/>
            <person name="Smailus D."/>
            <person name="Siddiqui A.S."/>
            <person name="Marra M.A."/>
            <person name="Jones S.J.M."/>
            <person name="Holt R."/>
            <person name="Brinkman F.S.L."/>
            <person name="Miyauchi K."/>
            <person name="Fukuda M."/>
            <person name="Davies J.E."/>
            <person name="Mohn W.W."/>
            <person name="Eltis L.D."/>
        </authorList>
    </citation>
    <scope>NUCLEOTIDE SEQUENCE [LARGE SCALE GENOMIC DNA]</scope>
    <source>
        <strain>RHA1</strain>
    </source>
</reference>
<evidence type="ECO:0000255" key="1">
    <source>
        <dbReference type="HAMAP-Rule" id="MF_00528"/>
    </source>
</evidence>
<proteinExistence type="inferred from homology"/>
<feature type="chain" id="PRO_0000267397" description="Nucleoside triphosphate pyrophosphatase">
    <location>
        <begin position="1"/>
        <end position="214"/>
    </location>
</feature>
<feature type="active site" description="Proton acceptor" evidence="1">
    <location>
        <position position="79"/>
    </location>
</feature>
<organism>
    <name type="scientific">Rhodococcus jostii (strain RHA1)</name>
    <dbReference type="NCBI Taxonomy" id="101510"/>
    <lineage>
        <taxon>Bacteria</taxon>
        <taxon>Bacillati</taxon>
        <taxon>Actinomycetota</taxon>
        <taxon>Actinomycetes</taxon>
        <taxon>Mycobacteriales</taxon>
        <taxon>Nocardiaceae</taxon>
        <taxon>Rhodococcus</taxon>
    </lineage>
</organism>